<gene>
    <name evidence="1" type="primary">eno</name>
    <name type="ordered locus">Bphy_1439</name>
</gene>
<comment type="function">
    <text evidence="1">Catalyzes the reversible conversion of 2-phosphoglycerate (2-PG) into phosphoenolpyruvate (PEP). It is essential for the degradation of carbohydrates via glycolysis.</text>
</comment>
<comment type="catalytic activity">
    <reaction evidence="1">
        <text>(2R)-2-phosphoglycerate = phosphoenolpyruvate + H2O</text>
        <dbReference type="Rhea" id="RHEA:10164"/>
        <dbReference type="ChEBI" id="CHEBI:15377"/>
        <dbReference type="ChEBI" id="CHEBI:58289"/>
        <dbReference type="ChEBI" id="CHEBI:58702"/>
        <dbReference type="EC" id="4.2.1.11"/>
    </reaction>
</comment>
<comment type="cofactor">
    <cofactor evidence="1">
        <name>Mg(2+)</name>
        <dbReference type="ChEBI" id="CHEBI:18420"/>
    </cofactor>
    <text evidence="1">Binds a second Mg(2+) ion via substrate during catalysis.</text>
</comment>
<comment type="pathway">
    <text evidence="1">Carbohydrate degradation; glycolysis; pyruvate from D-glyceraldehyde 3-phosphate: step 4/5.</text>
</comment>
<comment type="subcellular location">
    <subcellularLocation>
        <location evidence="1">Cytoplasm</location>
    </subcellularLocation>
    <subcellularLocation>
        <location evidence="1">Secreted</location>
    </subcellularLocation>
    <subcellularLocation>
        <location evidence="1">Cell surface</location>
    </subcellularLocation>
    <text evidence="1">Fractions of enolase are present in both the cytoplasm and on the cell surface.</text>
</comment>
<comment type="similarity">
    <text evidence="1">Belongs to the enolase family.</text>
</comment>
<accession>B2JIX0</accession>
<protein>
    <recommendedName>
        <fullName evidence="1">Enolase</fullName>
        <ecNumber evidence="1">4.2.1.11</ecNumber>
    </recommendedName>
    <alternativeName>
        <fullName evidence="1">2-phospho-D-glycerate hydro-lyase</fullName>
    </alternativeName>
    <alternativeName>
        <fullName evidence="1">2-phosphoglycerate dehydratase</fullName>
    </alternativeName>
</protein>
<name>ENO_PARP8</name>
<proteinExistence type="inferred from homology"/>
<organism>
    <name type="scientific">Paraburkholderia phymatum (strain DSM 17167 / CIP 108236 / LMG 21445 / STM815)</name>
    <name type="common">Burkholderia phymatum</name>
    <dbReference type="NCBI Taxonomy" id="391038"/>
    <lineage>
        <taxon>Bacteria</taxon>
        <taxon>Pseudomonadati</taxon>
        <taxon>Pseudomonadota</taxon>
        <taxon>Betaproteobacteria</taxon>
        <taxon>Burkholderiales</taxon>
        <taxon>Burkholderiaceae</taxon>
        <taxon>Paraburkholderia</taxon>
    </lineage>
</organism>
<reference key="1">
    <citation type="journal article" date="2014" name="Stand. Genomic Sci.">
        <title>Complete genome sequence of Burkholderia phymatum STM815(T), a broad host range and efficient nitrogen-fixing symbiont of Mimosa species.</title>
        <authorList>
            <person name="Moulin L."/>
            <person name="Klonowska A."/>
            <person name="Caroline B."/>
            <person name="Booth K."/>
            <person name="Vriezen J.A."/>
            <person name="Melkonian R."/>
            <person name="James E.K."/>
            <person name="Young J.P."/>
            <person name="Bena G."/>
            <person name="Hauser L."/>
            <person name="Land M."/>
            <person name="Kyrpides N."/>
            <person name="Bruce D."/>
            <person name="Chain P."/>
            <person name="Copeland A."/>
            <person name="Pitluck S."/>
            <person name="Woyke T."/>
            <person name="Lizotte-Waniewski M."/>
            <person name="Bristow J."/>
            <person name="Riley M."/>
        </authorList>
    </citation>
    <scope>NUCLEOTIDE SEQUENCE [LARGE SCALE GENOMIC DNA]</scope>
    <source>
        <strain>DSM 17167 / CIP 108236 / LMG 21445 / STM815</strain>
    </source>
</reference>
<dbReference type="EC" id="4.2.1.11" evidence="1"/>
<dbReference type="EMBL" id="CP001043">
    <property type="protein sequence ID" value="ACC70621.1"/>
    <property type="molecule type" value="Genomic_DNA"/>
</dbReference>
<dbReference type="RefSeq" id="WP_012400834.1">
    <property type="nucleotide sequence ID" value="NC_010622.1"/>
</dbReference>
<dbReference type="SMR" id="B2JIX0"/>
<dbReference type="STRING" id="391038.Bphy_1439"/>
<dbReference type="KEGG" id="bph:Bphy_1439"/>
<dbReference type="eggNOG" id="COG0148">
    <property type="taxonomic scope" value="Bacteria"/>
</dbReference>
<dbReference type="HOGENOM" id="CLU_031223_2_1_4"/>
<dbReference type="OrthoDB" id="9804716at2"/>
<dbReference type="UniPathway" id="UPA00109">
    <property type="reaction ID" value="UER00187"/>
</dbReference>
<dbReference type="Proteomes" id="UP000001192">
    <property type="component" value="Chromosome 1"/>
</dbReference>
<dbReference type="GO" id="GO:0009986">
    <property type="term" value="C:cell surface"/>
    <property type="evidence" value="ECO:0007669"/>
    <property type="project" value="UniProtKB-SubCell"/>
</dbReference>
<dbReference type="GO" id="GO:0005576">
    <property type="term" value="C:extracellular region"/>
    <property type="evidence" value="ECO:0007669"/>
    <property type="project" value="UniProtKB-SubCell"/>
</dbReference>
<dbReference type="GO" id="GO:0000015">
    <property type="term" value="C:phosphopyruvate hydratase complex"/>
    <property type="evidence" value="ECO:0007669"/>
    <property type="project" value="InterPro"/>
</dbReference>
<dbReference type="GO" id="GO:0000287">
    <property type="term" value="F:magnesium ion binding"/>
    <property type="evidence" value="ECO:0007669"/>
    <property type="project" value="UniProtKB-UniRule"/>
</dbReference>
<dbReference type="GO" id="GO:0004634">
    <property type="term" value="F:phosphopyruvate hydratase activity"/>
    <property type="evidence" value="ECO:0007669"/>
    <property type="project" value="UniProtKB-UniRule"/>
</dbReference>
<dbReference type="GO" id="GO:0006096">
    <property type="term" value="P:glycolytic process"/>
    <property type="evidence" value="ECO:0007669"/>
    <property type="project" value="UniProtKB-UniRule"/>
</dbReference>
<dbReference type="CDD" id="cd03313">
    <property type="entry name" value="enolase"/>
    <property type="match status" value="1"/>
</dbReference>
<dbReference type="FunFam" id="3.20.20.120:FF:000001">
    <property type="entry name" value="Enolase"/>
    <property type="match status" value="1"/>
</dbReference>
<dbReference type="FunFam" id="3.30.390.10:FF:000001">
    <property type="entry name" value="Enolase"/>
    <property type="match status" value="1"/>
</dbReference>
<dbReference type="Gene3D" id="3.20.20.120">
    <property type="entry name" value="Enolase-like C-terminal domain"/>
    <property type="match status" value="1"/>
</dbReference>
<dbReference type="Gene3D" id="3.30.390.10">
    <property type="entry name" value="Enolase-like, N-terminal domain"/>
    <property type="match status" value="1"/>
</dbReference>
<dbReference type="HAMAP" id="MF_00318">
    <property type="entry name" value="Enolase"/>
    <property type="match status" value="1"/>
</dbReference>
<dbReference type="InterPro" id="IPR000941">
    <property type="entry name" value="Enolase"/>
</dbReference>
<dbReference type="InterPro" id="IPR036849">
    <property type="entry name" value="Enolase-like_C_sf"/>
</dbReference>
<dbReference type="InterPro" id="IPR029017">
    <property type="entry name" value="Enolase-like_N"/>
</dbReference>
<dbReference type="InterPro" id="IPR020810">
    <property type="entry name" value="Enolase_C"/>
</dbReference>
<dbReference type="InterPro" id="IPR020809">
    <property type="entry name" value="Enolase_CS"/>
</dbReference>
<dbReference type="InterPro" id="IPR020811">
    <property type="entry name" value="Enolase_N"/>
</dbReference>
<dbReference type="NCBIfam" id="TIGR01060">
    <property type="entry name" value="eno"/>
    <property type="match status" value="1"/>
</dbReference>
<dbReference type="PANTHER" id="PTHR11902">
    <property type="entry name" value="ENOLASE"/>
    <property type="match status" value="1"/>
</dbReference>
<dbReference type="PANTHER" id="PTHR11902:SF1">
    <property type="entry name" value="ENOLASE"/>
    <property type="match status" value="1"/>
</dbReference>
<dbReference type="Pfam" id="PF00113">
    <property type="entry name" value="Enolase_C"/>
    <property type="match status" value="1"/>
</dbReference>
<dbReference type="Pfam" id="PF03952">
    <property type="entry name" value="Enolase_N"/>
    <property type="match status" value="1"/>
</dbReference>
<dbReference type="PIRSF" id="PIRSF001400">
    <property type="entry name" value="Enolase"/>
    <property type="match status" value="1"/>
</dbReference>
<dbReference type="PRINTS" id="PR00148">
    <property type="entry name" value="ENOLASE"/>
</dbReference>
<dbReference type="SFLD" id="SFLDS00001">
    <property type="entry name" value="Enolase"/>
    <property type="match status" value="1"/>
</dbReference>
<dbReference type="SFLD" id="SFLDF00002">
    <property type="entry name" value="enolase"/>
    <property type="match status" value="1"/>
</dbReference>
<dbReference type="SMART" id="SM01192">
    <property type="entry name" value="Enolase_C"/>
    <property type="match status" value="1"/>
</dbReference>
<dbReference type="SMART" id="SM01193">
    <property type="entry name" value="Enolase_N"/>
    <property type="match status" value="1"/>
</dbReference>
<dbReference type="SUPFAM" id="SSF51604">
    <property type="entry name" value="Enolase C-terminal domain-like"/>
    <property type="match status" value="1"/>
</dbReference>
<dbReference type="SUPFAM" id="SSF54826">
    <property type="entry name" value="Enolase N-terminal domain-like"/>
    <property type="match status" value="1"/>
</dbReference>
<dbReference type="PROSITE" id="PS00164">
    <property type="entry name" value="ENOLASE"/>
    <property type="match status" value="1"/>
</dbReference>
<evidence type="ECO:0000255" key="1">
    <source>
        <dbReference type="HAMAP-Rule" id="MF_00318"/>
    </source>
</evidence>
<keyword id="KW-0963">Cytoplasm</keyword>
<keyword id="KW-0324">Glycolysis</keyword>
<keyword id="KW-0456">Lyase</keyword>
<keyword id="KW-0460">Magnesium</keyword>
<keyword id="KW-0479">Metal-binding</keyword>
<keyword id="KW-1185">Reference proteome</keyword>
<keyword id="KW-0964">Secreted</keyword>
<feature type="chain" id="PRO_1000115840" description="Enolase">
    <location>
        <begin position="1"/>
        <end position="427"/>
    </location>
</feature>
<feature type="active site" description="Proton donor" evidence="1">
    <location>
        <position position="205"/>
    </location>
</feature>
<feature type="active site" description="Proton acceptor" evidence="1">
    <location>
        <position position="337"/>
    </location>
</feature>
<feature type="binding site" evidence="1">
    <location>
        <position position="163"/>
    </location>
    <ligand>
        <name>(2R)-2-phosphoglycerate</name>
        <dbReference type="ChEBI" id="CHEBI:58289"/>
    </ligand>
</feature>
<feature type="binding site" evidence="1">
    <location>
        <position position="242"/>
    </location>
    <ligand>
        <name>Mg(2+)</name>
        <dbReference type="ChEBI" id="CHEBI:18420"/>
    </ligand>
</feature>
<feature type="binding site" evidence="1">
    <location>
        <position position="285"/>
    </location>
    <ligand>
        <name>Mg(2+)</name>
        <dbReference type="ChEBI" id="CHEBI:18420"/>
    </ligand>
</feature>
<feature type="binding site" evidence="1">
    <location>
        <position position="312"/>
    </location>
    <ligand>
        <name>Mg(2+)</name>
        <dbReference type="ChEBI" id="CHEBI:18420"/>
    </ligand>
</feature>
<feature type="binding site" evidence="1">
    <location>
        <position position="337"/>
    </location>
    <ligand>
        <name>(2R)-2-phosphoglycerate</name>
        <dbReference type="ChEBI" id="CHEBI:58289"/>
    </ligand>
</feature>
<feature type="binding site" evidence="1">
    <location>
        <position position="366"/>
    </location>
    <ligand>
        <name>(2R)-2-phosphoglycerate</name>
        <dbReference type="ChEBI" id="CHEBI:58289"/>
    </ligand>
</feature>
<feature type="binding site" evidence="1">
    <location>
        <position position="367"/>
    </location>
    <ligand>
        <name>(2R)-2-phosphoglycerate</name>
        <dbReference type="ChEBI" id="CHEBI:58289"/>
    </ligand>
</feature>
<feature type="binding site" evidence="1">
    <location>
        <position position="388"/>
    </location>
    <ligand>
        <name>(2R)-2-phosphoglycerate</name>
        <dbReference type="ChEBI" id="CHEBI:58289"/>
    </ligand>
</feature>
<sequence>MSAIVDIIGREILDSRGNPTVECDVLLESGTMGRAAVPSGASTGSREAIELRDGEAGRYGGKGVLKAVEHINTEISEAIMGLDASEQAFLDKTLLELDGTDNKSRLGANAMLAVSMAVAKAAAEEAGLPLYRYFGGSGAMQLPVPMMNIVNGGAHANNSLDIQEFMIVPVSQPTFREALRCGAEVFHALKKILSDRGMSTAVGDEGGFAPNFGSNDECLSTILQAIEKAGYRAGEDVLLALDCAASEFYHDGKYQLAGEGLQLSSAEFADYLATLADKFPIVSIEDGMHEGDWEGWKLLTDKLGKKIQLVGDDLFVTNTRILKEGIEKGIANSILIKINQIGTLTETFAAIEMAKRAGYTAVISHRSGETEDSTIADIAVGLNAGQIKTGSLSRSDRISKYNQLLRIEEDLGDIASYPGKSAFYNLR</sequence>